<feature type="signal peptide" evidence="1">
    <location>
        <begin position="1"/>
        <end position="22"/>
    </location>
</feature>
<feature type="peptide" id="PRO_0000041499" description="QWGYGGY-amide" evidence="1">
    <location>
        <begin position="23"/>
        <end position="29"/>
    </location>
</feature>
<feature type="peptide" id="PRO_0000041500" description="GYGGYGGY-amide" evidence="1">
    <location>
        <begin position="32"/>
        <end position="39"/>
    </location>
</feature>
<feature type="peptide" id="PRO_0000041501" description="GYGGY-amide" evidence="1">
    <location>
        <begin position="42"/>
        <end position="46"/>
    </location>
</feature>
<feature type="peptide" id="PRO_0000041502" description="GYGGY-amide" evidence="1">
    <location>
        <begin position="49"/>
        <end position="53"/>
    </location>
</feature>
<feature type="peptide" id="PRO_0000041503" description="GMW-amide" evidence="1">
    <location>
        <begin position="55"/>
        <end position="58"/>
    </location>
</feature>
<feature type="peptide" id="PRO_0000041504" description="PYGGYGW-amide" evidence="1">
    <location>
        <begin position="61"/>
        <end position="67"/>
    </location>
</feature>
<feature type="modified residue" description="Tyrosine amide" evidence="1">
    <location>
        <position position="29"/>
    </location>
</feature>
<feature type="modified residue" description="Tyrosine amide" evidence="1">
    <location>
        <position position="39"/>
    </location>
</feature>
<feature type="modified residue" description="Tyrosine amide" evidence="1">
    <location>
        <position position="46"/>
    </location>
</feature>
<feature type="modified residue" description="Tyrosine amide" evidence="1">
    <location>
        <position position="53"/>
    </location>
</feature>
<feature type="modified residue" description="Tryptophan amide" evidence="1">
    <location>
        <position position="58"/>
    </location>
</feature>
<feature type="modified residue" description="Tryptophan amide" evidence="1">
    <location>
        <position position="67"/>
    </location>
</feature>
<accession>O44663</accession>
<keyword id="KW-0027">Amidation</keyword>
<keyword id="KW-0165">Cleavage on pair of basic residues</keyword>
<keyword id="KW-0527">Neuropeptide</keyword>
<keyword id="KW-1185">Reference proteome</keyword>
<keyword id="KW-0677">Repeat</keyword>
<keyword id="KW-0964">Secreted</keyword>
<keyword id="KW-0732">Signal</keyword>
<gene>
    <name type="primary">nlp-30</name>
    <name type="ORF">B0213.5</name>
</gene>
<sequence length="69" mass="7243">MISTSSILILVVLLACFMAASAQWGYGGYGRGYGGYGGYGRGYGGYGRGYGGYGRGMWGRPYGGYGWGK</sequence>
<proteinExistence type="evidence at transcript level"/>
<reference key="1">
    <citation type="journal article" date="1998" name="Science">
        <title>Genome sequence of the nematode C. elegans: a platform for investigating biology.</title>
        <authorList>
            <consortium name="The C. elegans sequencing consortium"/>
        </authorList>
    </citation>
    <scope>NUCLEOTIDE SEQUENCE [LARGE SCALE GENOMIC DNA]</scope>
    <source>
        <strain>Bristol N2</strain>
    </source>
</reference>
<reference key="2">
    <citation type="journal article" date="2001" name="Proc. Natl. Acad. Sci. U.S.A.">
        <title>Identification of neuropeptide-like protein gene families in Caenorhabditis elegans and other species.</title>
        <authorList>
            <person name="Nathoo A.N."/>
            <person name="Moeller R.A."/>
            <person name="Westlund B.A."/>
            <person name="Hart A.C."/>
        </authorList>
    </citation>
    <scope>IDENTIFICATION</scope>
    <scope>TISSUE SPECIFICITY</scope>
</reference>
<reference key="3">
    <citation type="journal article" date="2009" name="Cell Host Microbe">
        <title>Antifungal innate immunity in C. elegans: PKCdelta links G protein signaling and a conserved p38 MAPK cascade.</title>
        <authorList>
            <person name="Ziegler K."/>
            <person name="Kurz C.L."/>
            <person name="Cypowyj S."/>
            <person name="Couillault C."/>
            <person name="Pophillat M."/>
            <person name="Pujol N."/>
            <person name="Ewbank J.J."/>
        </authorList>
    </citation>
    <scope>FUNCTION</scope>
    <scope>INDUCTION BY FUNGAL INFECTION</scope>
</reference>
<name>NLP30_CAEEL</name>
<protein>
    <recommendedName>
        <fullName>Neuropeptide-like protein 30</fullName>
    </recommendedName>
    <component>
        <recommendedName>
            <fullName>QWGYGGY-amide</fullName>
        </recommendedName>
    </component>
    <component>
        <recommendedName>
            <fullName>GYGGYGGY-amide</fullName>
        </recommendedName>
    </component>
    <component>
        <recommendedName>
            <fullName>GYGGY-amide</fullName>
        </recommendedName>
    </component>
    <component>
        <recommendedName>
            <fullName>GMW-amide</fullName>
        </recommendedName>
    </component>
    <component>
        <recommendedName>
            <fullName>PYGGYGW-amide</fullName>
        </recommendedName>
    </component>
</protein>
<organism>
    <name type="scientific">Caenorhabditis elegans</name>
    <dbReference type="NCBI Taxonomy" id="6239"/>
    <lineage>
        <taxon>Eukaryota</taxon>
        <taxon>Metazoa</taxon>
        <taxon>Ecdysozoa</taxon>
        <taxon>Nematoda</taxon>
        <taxon>Chromadorea</taxon>
        <taxon>Rhabditida</taxon>
        <taxon>Rhabditina</taxon>
        <taxon>Rhabditomorpha</taxon>
        <taxon>Rhabditoidea</taxon>
        <taxon>Rhabditidae</taxon>
        <taxon>Peloderinae</taxon>
        <taxon>Caenorhabditis</taxon>
    </lineage>
</organism>
<dbReference type="EMBL" id="FO080121">
    <property type="protein sequence ID" value="CCD61355.1"/>
    <property type="molecule type" value="Genomic_DNA"/>
</dbReference>
<dbReference type="PIR" id="B89016">
    <property type="entry name" value="B89016"/>
</dbReference>
<dbReference type="RefSeq" id="NP_504108.1">
    <property type="nucleotide sequence ID" value="NM_071707.4"/>
</dbReference>
<dbReference type="STRING" id="6239.B0213.5.1"/>
<dbReference type="PaxDb" id="6239-B0213.5"/>
<dbReference type="EnsemblMetazoa" id="B0213.5.1">
    <property type="protein sequence ID" value="B0213.5.1"/>
    <property type="gene ID" value="WBGene00003768"/>
</dbReference>
<dbReference type="GeneID" id="3565444"/>
<dbReference type="KEGG" id="cel:CELE_B0213.5"/>
<dbReference type="UCSC" id="B0213.5">
    <property type="organism name" value="c. elegans"/>
</dbReference>
<dbReference type="AGR" id="WB:WBGene00003768"/>
<dbReference type="CTD" id="3565444"/>
<dbReference type="WormBase" id="B0213.5">
    <property type="protein sequence ID" value="CE16776"/>
    <property type="gene ID" value="WBGene00003768"/>
    <property type="gene designation" value="nlp-30"/>
</dbReference>
<dbReference type="HOGENOM" id="CLU_193227_0_0_1"/>
<dbReference type="InParanoid" id="O44663"/>
<dbReference type="OMA" id="ITKFTLV"/>
<dbReference type="PRO" id="PR:O44663"/>
<dbReference type="Proteomes" id="UP000001940">
    <property type="component" value="Chromosome V"/>
</dbReference>
<dbReference type="Bgee" id="WBGene00003768">
    <property type="expression patterns" value="Expressed in larva and 4 other cell types or tissues"/>
</dbReference>
<dbReference type="GO" id="GO:0005576">
    <property type="term" value="C:extracellular region"/>
    <property type="evidence" value="ECO:0007669"/>
    <property type="project" value="UniProtKB-SubCell"/>
</dbReference>
<dbReference type="GO" id="GO:0007218">
    <property type="term" value="P:neuropeptide signaling pathway"/>
    <property type="evidence" value="ECO:0007669"/>
    <property type="project" value="UniProtKB-KW"/>
</dbReference>
<evidence type="ECO:0000255" key="1"/>
<evidence type="ECO:0000269" key="2">
    <source>
    </source>
</evidence>
<evidence type="ECO:0000269" key="3">
    <source>
    </source>
</evidence>
<evidence type="ECO:0000303" key="4">
    <source>
    </source>
</evidence>
<evidence type="ECO:0000305" key="5"/>
<comment type="function">
    <text evidence="4">May have antimicrobial activity. May play a role in response to fungal infection.</text>
</comment>
<comment type="subcellular location">
    <subcellularLocation>
        <location evidence="5">Secreted</location>
    </subcellularLocation>
</comment>
<comment type="tissue specificity">
    <text evidence="2">Expressed in hypoderm.</text>
</comment>
<comment type="induction">
    <text evidence="3">Upon D.coniospora infection.</text>
</comment>
<comment type="similarity">
    <text evidence="5">Belongs to the YARP (YGGW-amide related peptide) family.</text>
</comment>